<organism>
    <name type="scientific">Lacticaseibacillus rhamnosus</name>
    <name type="common">Lactobacillus rhamnosus</name>
    <dbReference type="NCBI Taxonomy" id="47715"/>
    <lineage>
        <taxon>Bacteria</taxon>
        <taxon>Bacillati</taxon>
        <taxon>Bacillota</taxon>
        <taxon>Bacilli</taxon>
        <taxon>Lactobacillales</taxon>
        <taxon>Lactobacillaceae</taxon>
        <taxon>Lacticaseibacillus</taxon>
    </lineage>
</organism>
<protein>
    <recommendedName>
        <fullName evidence="1">D-alanine--D-alanyl carrier protein ligase</fullName>
        <shortName evidence="1">DCL</shortName>
        <ecNumber evidence="1">6.2.1.54</ecNumber>
    </recommendedName>
    <alternativeName>
        <fullName evidence="1">D-alanine--poly(phosphoribitol) ligase subunit 1</fullName>
    </alternativeName>
    <alternativeName>
        <fullName evidence="1">D-alanine-activating enzyme</fullName>
        <shortName evidence="1">DAE</shortName>
    </alternativeName>
</protein>
<dbReference type="EC" id="6.2.1.54" evidence="1"/>
<dbReference type="EMBL" id="M83993">
    <property type="protein sequence ID" value="AAA25234.1"/>
    <property type="molecule type" value="Genomic_DNA"/>
</dbReference>
<dbReference type="EMBL" id="U43894">
    <property type="protein sequence ID" value="AAB17657.1"/>
    <property type="molecule type" value="Genomic_DNA"/>
</dbReference>
<dbReference type="EMBL" id="AF192553">
    <property type="protein sequence ID" value="AAF09201.1"/>
    <property type="molecule type" value="Genomic_DNA"/>
</dbReference>
<dbReference type="RefSeq" id="WP_015764309.1">
    <property type="nucleotide sequence ID" value="NZ_WPCQ01000011.1"/>
</dbReference>
<dbReference type="SMR" id="P35854"/>
<dbReference type="STRING" id="47715.AWJ15_13945"/>
<dbReference type="eggNOG" id="COG1020">
    <property type="taxonomic scope" value="Bacteria"/>
</dbReference>
<dbReference type="UniPathway" id="UPA00556"/>
<dbReference type="GO" id="GO:0005737">
    <property type="term" value="C:cytoplasm"/>
    <property type="evidence" value="ECO:0007669"/>
    <property type="project" value="UniProtKB-SubCell"/>
</dbReference>
<dbReference type="GO" id="GO:0005524">
    <property type="term" value="F:ATP binding"/>
    <property type="evidence" value="ECO:0007669"/>
    <property type="project" value="UniProtKB-KW"/>
</dbReference>
<dbReference type="GO" id="GO:0047473">
    <property type="term" value="F:D-alanine [D-alanyl carrier protein] ligase activity"/>
    <property type="evidence" value="ECO:0007669"/>
    <property type="project" value="UniProtKB-UniRule"/>
</dbReference>
<dbReference type="GO" id="GO:0070395">
    <property type="term" value="P:lipoteichoic acid biosynthetic process"/>
    <property type="evidence" value="ECO:0007669"/>
    <property type="project" value="UniProtKB-UniRule"/>
</dbReference>
<dbReference type="CDD" id="cd05945">
    <property type="entry name" value="DltA"/>
    <property type="match status" value="1"/>
</dbReference>
<dbReference type="FunFam" id="3.30.300.30:FF:000012">
    <property type="entry name" value="D-alanine--D-alanyl carrier protein ligase"/>
    <property type="match status" value="1"/>
</dbReference>
<dbReference type="Gene3D" id="3.30.300.30">
    <property type="match status" value="1"/>
</dbReference>
<dbReference type="Gene3D" id="3.40.50.12780">
    <property type="entry name" value="N-terminal domain of ligase-like"/>
    <property type="match status" value="1"/>
</dbReference>
<dbReference type="HAMAP" id="MF_00593">
    <property type="entry name" value="DltA"/>
    <property type="match status" value="1"/>
</dbReference>
<dbReference type="InterPro" id="IPR010071">
    <property type="entry name" value="AA_adenyl_dom"/>
</dbReference>
<dbReference type="InterPro" id="IPR025110">
    <property type="entry name" value="AMP-bd_C"/>
</dbReference>
<dbReference type="InterPro" id="IPR045851">
    <property type="entry name" value="AMP-bd_C_sf"/>
</dbReference>
<dbReference type="InterPro" id="IPR020845">
    <property type="entry name" value="AMP-binding_CS"/>
</dbReference>
<dbReference type="InterPro" id="IPR000873">
    <property type="entry name" value="AMP-dep_synth/lig_dom"/>
</dbReference>
<dbReference type="InterPro" id="IPR042099">
    <property type="entry name" value="ANL_N_sf"/>
</dbReference>
<dbReference type="InterPro" id="IPR010072">
    <property type="entry name" value="DltA"/>
</dbReference>
<dbReference type="InterPro" id="IPR044507">
    <property type="entry name" value="DltA-like"/>
</dbReference>
<dbReference type="NCBIfam" id="TIGR01733">
    <property type="entry name" value="AA-adenyl-dom"/>
    <property type="match status" value="1"/>
</dbReference>
<dbReference type="NCBIfam" id="TIGR01734">
    <property type="entry name" value="D-ala-DACP-lig"/>
    <property type="match status" value="1"/>
</dbReference>
<dbReference type="NCBIfam" id="NF003417">
    <property type="entry name" value="PRK04813.1"/>
    <property type="match status" value="1"/>
</dbReference>
<dbReference type="PANTHER" id="PTHR45398">
    <property type="match status" value="1"/>
</dbReference>
<dbReference type="PANTHER" id="PTHR45398:SF1">
    <property type="entry name" value="ENZYME, PUTATIVE (JCVI)-RELATED"/>
    <property type="match status" value="1"/>
</dbReference>
<dbReference type="Pfam" id="PF00501">
    <property type="entry name" value="AMP-binding"/>
    <property type="match status" value="1"/>
</dbReference>
<dbReference type="Pfam" id="PF13193">
    <property type="entry name" value="AMP-binding_C"/>
    <property type="match status" value="1"/>
</dbReference>
<dbReference type="SUPFAM" id="SSF56801">
    <property type="entry name" value="Acetyl-CoA synthetase-like"/>
    <property type="match status" value="1"/>
</dbReference>
<dbReference type="PROSITE" id="PS00455">
    <property type="entry name" value="AMP_BINDING"/>
    <property type="match status" value="1"/>
</dbReference>
<sequence>MIDNVITAIDRVAAEHPTRVAYDYEGTQYTYAQLKEGSDRLAGFFAESLPAGEPIIVYGGQTFDMVEVFLGLSKSGHAYIPIDTHSPNERITQVQDVAHAPAVIEVAPLPITVPDVKIIRAPALHQAEQSHAPIHSLQHAVAGDDNYYIIFTSGTTGKPKGVQISHDNLLSYVNWNISDFGLEEGVVAMSQPPYSFDLSVMDLYPTLVLGGTLKALPKEVTDNFKELFATLPKLGLNEWVSTPSFVEIALLDPNFKQENYPNLTHFLFCGEELVNKTAQALITRFPKATVYNTYGPTEATVAVTGMAITQAIVDQYPRLPIGYAKPDTNVYVVDEQGEQVSAGTEGELMIVGPSVSKGYLNNPDKTAAAFFKAGNQRGYRSGDLVTMTADGMVFYRGRTDFQVKLHGYRIELEDVDHNLNQVSYIKQASTVPRYDKDHKVAQLIAFAVAKPNDFDSEMKLTQAIKAELGKMVMEYMIPQRIIYRDQLPLTANGKVDRKALIAEVNH</sequence>
<evidence type="ECO:0000255" key="1">
    <source>
        <dbReference type="HAMAP-Rule" id="MF_00593"/>
    </source>
</evidence>
<evidence type="ECO:0000305" key="2"/>
<comment type="function">
    <text evidence="1">Catalyzes the first step in the D-alanylation of lipoteichoic acid (LTA), the activation of D-alanine and its transfer onto the D-alanyl carrier protein (Dcp) DltC. In an ATP-dependent two-step reaction, forms a high energy D-alanyl-AMP intermediate, followed by transfer of the D-alanyl residue as a thiol ester to the phosphopantheinyl prosthetic group of the Dcp. D-alanylation of LTA plays an important role in modulating the properties of the cell wall in Gram-positive bacteria, influencing the net charge of the cell wall.</text>
</comment>
<comment type="catalytic activity">
    <reaction evidence="1">
        <text>holo-[D-alanyl-carrier protein] + D-alanine + ATP = D-alanyl-[D-alanyl-carrier protein] + AMP + diphosphate</text>
        <dbReference type="Rhea" id="RHEA:55132"/>
        <dbReference type="Rhea" id="RHEA-COMP:14102"/>
        <dbReference type="Rhea" id="RHEA-COMP:14103"/>
        <dbReference type="ChEBI" id="CHEBI:30616"/>
        <dbReference type="ChEBI" id="CHEBI:33019"/>
        <dbReference type="ChEBI" id="CHEBI:57416"/>
        <dbReference type="ChEBI" id="CHEBI:64479"/>
        <dbReference type="ChEBI" id="CHEBI:138620"/>
        <dbReference type="ChEBI" id="CHEBI:456215"/>
        <dbReference type="EC" id="6.2.1.54"/>
    </reaction>
</comment>
<comment type="pathway">
    <text evidence="1">Cell wall biogenesis; lipoteichoic acid biosynthesis.</text>
</comment>
<comment type="subcellular location">
    <subcellularLocation>
        <location evidence="1 2">Cytoplasm</location>
    </subcellularLocation>
</comment>
<comment type="similarity">
    <text evidence="1">Belongs to the ATP-dependent AMP-binding enzyme family. DltA subfamily.</text>
</comment>
<accession>P35854</accession>
<gene>
    <name evidence="1" type="primary">dltA</name>
    <name type="synonym">dae</name>
</gene>
<reference key="1">
    <citation type="journal article" date="1992" name="J. Bacteriol.">
        <title>Biosynthesis of D-alanyl-lipoteichoic acid: cloning, nucleotide sequence, and expression of the Lactobacillus casei gene for the D-alanine-activating enzyme.</title>
        <authorList>
            <person name="Heaton M.P."/>
            <person name="Neuhaus F.C."/>
        </authorList>
    </citation>
    <scope>NUCLEOTIDE SEQUENCE [GENOMIC DNA]</scope>
    <scope>PROTEIN SEQUENCE OF 1-21</scope>
    <source>
        <strain>ATCC 7469 / DSM 20021 / JCM 1136 / CCUG 21452 / KCTC 1046 / NCDO 243 / NCIMB 6375 / NCTC 12953</strain>
    </source>
</reference>
<reference key="2">
    <citation type="submission" date="1996-01" db="EMBL/GenBank/DDBJ databases">
        <authorList>
            <person name="Debabov D.V."/>
            <person name="Heaton M.P."/>
            <person name="Zhang Q."/>
            <person name="Stewart K."/>
            <person name="Lambalot R.H."/>
            <person name="Neuhaus F.C."/>
        </authorList>
    </citation>
    <scope>NUCLEOTIDE SEQUENCE [GENOMIC DNA]</scope>
    <source>
        <strain>ATCC 7469 / DSM 20021 / JCM 1136 / CCUG 21452 / KCTC 1046 / NCDO 243 / NCIMB 6375 / NCTC 12953</strain>
    </source>
</reference>
<reference key="3">
    <citation type="journal article" date="2000" name="J. Bacteriol.">
        <title>Biosynthesis of lipoteichoic acid in Lactobacillus rhamnosus: role of DltD in D-alanylation.</title>
        <authorList>
            <person name="Debabov D.V."/>
            <person name="Kiriukhin M.Y."/>
            <person name="Neuhaus F.C."/>
        </authorList>
    </citation>
    <scope>NUCLEOTIDE SEQUENCE [GENOMIC DNA]</scope>
    <source>
        <strain>ATCC 7469 / DSM 20021 / JCM 1136 / CCUG 21452 / KCTC 1046 / NCDO 243 / NCIMB 6375 / NCTC 12953</strain>
    </source>
</reference>
<name>DLTA_LACRH</name>
<keyword id="KW-0067">ATP-binding</keyword>
<keyword id="KW-0963">Cytoplasm</keyword>
<keyword id="KW-0903">Direct protein sequencing</keyword>
<keyword id="KW-0436">Ligase</keyword>
<keyword id="KW-0547">Nucleotide-binding</keyword>
<proteinExistence type="evidence at protein level"/>
<feature type="chain" id="PRO_0000213145" description="D-alanine--D-alanyl carrier protein ligase">
    <location>
        <begin position="1"/>
        <end position="506"/>
    </location>
</feature>
<feature type="binding site" evidence="1">
    <location>
        <begin position="152"/>
        <end position="153"/>
    </location>
    <ligand>
        <name>ATP</name>
        <dbReference type="ChEBI" id="CHEBI:30616"/>
    </ligand>
</feature>
<feature type="binding site" evidence="1">
    <location>
        <position position="197"/>
    </location>
    <ligand>
        <name>D-alanine</name>
        <dbReference type="ChEBI" id="CHEBI:57416"/>
    </ligand>
</feature>
<feature type="binding site" evidence="1">
    <location>
        <begin position="292"/>
        <end position="297"/>
    </location>
    <ligand>
        <name>ATP</name>
        <dbReference type="ChEBI" id="CHEBI:30616"/>
    </ligand>
</feature>
<feature type="binding site" evidence="1">
    <location>
        <position position="301"/>
    </location>
    <ligand>
        <name>D-alanine</name>
        <dbReference type="ChEBI" id="CHEBI:57416"/>
    </ligand>
</feature>
<feature type="binding site" evidence="1">
    <location>
        <position position="383"/>
    </location>
    <ligand>
        <name>ATP</name>
        <dbReference type="ChEBI" id="CHEBI:30616"/>
    </ligand>
</feature>
<feature type="binding site" evidence="1">
    <location>
        <begin position="395"/>
        <end position="398"/>
    </location>
    <ligand>
        <name>ATP</name>
        <dbReference type="ChEBI" id="CHEBI:30616"/>
    </ligand>
</feature>
<feature type="binding site" evidence="1">
    <location>
        <position position="494"/>
    </location>
    <ligand>
        <name>ATP</name>
        <dbReference type="ChEBI" id="CHEBI:30616"/>
    </ligand>
</feature>
<feature type="binding site" evidence="1">
    <location>
        <position position="494"/>
    </location>
    <ligand>
        <name>D-alanine</name>
        <dbReference type="ChEBI" id="CHEBI:57416"/>
    </ligand>
</feature>